<keyword id="KW-0053">Apoptosis</keyword>
<keyword id="KW-0963">Cytoplasm</keyword>
<keyword id="KW-0496">Mitochondrion</keyword>
<keyword id="KW-1185">Reference proteome</keyword>
<comment type="function">
    <text evidence="1">Regulates cell growth, proliferation and survival via inhibition of the activity of the mammalian target of rapamycin complex 1 (mTORC1). Inhibition of mTORC1 is mediated by a pathway that involves ddit4/redd1, akt1, the tsc1-tsc2 complex and the GTPase rheb. Plays an important role in responses to cellular energy levels and cellular stress, including responses to hypoxia and DNA damage, via its effect on mTORC1 activity. Plays a role in neuronal differentiation, neuron migration during embryonic brain development and in neuronal cell death (By similarity).</text>
</comment>
<comment type="subcellular location">
    <subcellularLocation>
        <location evidence="1">Cytoplasm</location>
    </subcellularLocation>
    <subcellularLocation>
        <location evidence="1">Mitochondrion</location>
    </subcellularLocation>
</comment>
<comment type="similarity">
    <text evidence="3">Belongs to the DDIT4 family.</text>
</comment>
<proteinExistence type="evidence at transcript level"/>
<feature type="chain" id="PRO_0000307200" description="DNA damage-inducible transcript 4 protein">
    <location>
        <begin position="1"/>
        <end position="220"/>
    </location>
</feature>
<feature type="region of interest" description="Disordered" evidence="2">
    <location>
        <begin position="1"/>
        <end position="62"/>
    </location>
</feature>
<feature type="compositionally biased region" description="Low complexity" evidence="2">
    <location>
        <begin position="7"/>
        <end position="22"/>
    </location>
</feature>
<dbReference type="EMBL" id="BC053258">
    <property type="protein sequence ID" value="AAH53258.1"/>
    <property type="molecule type" value="mRNA"/>
</dbReference>
<dbReference type="RefSeq" id="NP_956401.1">
    <property type="nucleotide sequence ID" value="NM_200107.2"/>
</dbReference>
<dbReference type="SMR" id="Q7T346"/>
<dbReference type="FunCoup" id="Q7T346">
    <property type="interactions" value="807"/>
</dbReference>
<dbReference type="STRING" id="7955.ENSDARP00000127401"/>
<dbReference type="PaxDb" id="7955-ENSDARP00000127401"/>
<dbReference type="Ensembl" id="ENSDART00000054788">
    <property type="protein sequence ID" value="ENSDARP00000054787"/>
    <property type="gene ID" value="ENSDARG00000037618"/>
</dbReference>
<dbReference type="Ensembl" id="ENSDART00000152899">
    <property type="protein sequence ID" value="ENSDARP00000127401"/>
    <property type="gene ID" value="ENSDARG00000037618"/>
</dbReference>
<dbReference type="GeneID" id="378866"/>
<dbReference type="KEGG" id="dre:378866"/>
<dbReference type="AGR" id="ZFIN:ZDB-GENE-031002-35"/>
<dbReference type="CTD" id="54541"/>
<dbReference type="ZFIN" id="ZDB-GENE-031002-35">
    <property type="gene designation" value="ddit4"/>
</dbReference>
<dbReference type="eggNOG" id="ENOG502RB72">
    <property type="taxonomic scope" value="Eukaryota"/>
</dbReference>
<dbReference type="HOGENOM" id="CLU_086145_1_0_1"/>
<dbReference type="InParanoid" id="Q7T346"/>
<dbReference type="OMA" id="FFDPMEE"/>
<dbReference type="OrthoDB" id="10018535at2759"/>
<dbReference type="PhylomeDB" id="Q7T346"/>
<dbReference type="TreeFam" id="TF105007"/>
<dbReference type="Reactome" id="R-DRE-5628897">
    <property type="pathway name" value="TP53 Regulates Metabolic Genes"/>
</dbReference>
<dbReference type="PRO" id="PR:Q7T346"/>
<dbReference type="Proteomes" id="UP000000437">
    <property type="component" value="Chromosome 12"/>
</dbReference>
<dbReference type="Bgee" id="ENSDARG00000037618">
    <property type="expression patterns" value="Expressed in early embryo and 47 other cell types or tissues"/>
</dbReference>
<dbReference type="ExpressionAtlas" id="Q7T346">
    <property type="expression patterns" value="baseline"/>
</dbReference>
<dbReference type="GO" id="GO:0005737">
    <property type="term" value="C:cytoplasm"/>
    <property type="evidence" value="ECO:0000250"/>
    <property type="project" value="UniProtKB"/>
</dbReference>
<dbReference type="GO" id="GO:0005739">
    <property type="term" value="C:mitochondrion"/>
    <property type="evidence" value="ECO:0007669"/>
    <property type="project" value="UniProtKB-SubCell"/>
</dbReference>
<dbReference type="GO" id="GO:0071889">
    <property type="term" value="F:14-3-3 protein binding"/>
    <property type="evidence" value="ECO:0000318"/>
    <property type="project" value="GO_Central"/>
</dbReference>
<dbReference type="GO" id="GO:0006915">
    <property type="term" value="P:apoptotic process"/>
    <property type="evidence" value="ECO:0000318"/>
    <property type="project" value="GO_Central"/>
</dbReference>
<dbReference type="GO" id="GO:0009953">
    <property type="term" value="P:dorsal/ventral pattern formation"/>
    <property type="evidence" value="ECO:0000315"/>
    <property type="project" value="ZFIN"/>
</dbReference>
<dbReference type="GO" id="GO:0032007">
    <property type="term" value="P:negative regulation of TOR signaling"/>
    <property type="evidence" value="ECO:0000318"/>
    <property type="project" value="GO_Central"/>
</dbReference>
<dbReference type="GO" id="GO:0001666">
    <property type="term" value="P:response to hypoxia"/>
    <property type="evidence" value="ECO:0000318"/>
    <property type="project" value="GO_Central"/>
</dbReference>
<dbReference type="FunFam" id="3.90.470.40:FF:000001">
    <property type="entry name" value="DNA damage-inducible transcript 4 protein"/>
    <property type="match status" value="1"/>
</dbReference>
<dbReference type="Gene3D" id="3.90.470.40">
    <property type="entry name" value="RTP801-like"/>
    <property type="match status" value="1"/>
</dbReference>
<dbReference type="InterPro" id="IPR012918">
    <property type="entry name" value="RTP801-like"/>
</dbReference>
<dbReference type="InterPro" id="IPR038281">
    <property type="entry name" value="RTP801-like_C_sf"/>
</dbReference>
<dbReference type="PANTHER" id="PTHR12478:SF7">
    <property type="entry name" value="DNA DAMAGE-INDUCIBLE TRANSCRIPT 4 PROTEIN"/>
    <property type="match status" value="1"/>
</dbReference>
<dbReference type="PANTHER" id="PTHR12478">
    <property type="entry name" value="DNA-DAMAGE-INDUCIBLE TRANSCRIPT 4 PROTEIN DDIT4"/>
    <property type="match status" value="1"/>
</dbReference>
<dbReference type="Pfam" id="PF07809">
    <property type="entry name" value="RTP801_C"/>
    <property type="match status" value="1"/>
</dbReference>
<evidence type="ECO:0000250" key="1"/>
<evidence type="ECO:0000256" key="2">
    <source>
        <dbReference type="SAM" id="MobiDB-lite"/>
    </source>
</evidence>
<evidence type="ECO:0000305" key="3"/>
<name>DDIT4_DANRE</name>
<reference key="1">
    <citation type="submission" date="2003-06" db="EMBL/GenBank/DDBJ databases">
        <authorList>
            <consortium name="NIH - Zebrafish Gene Collection (ZGC) project"/>
        </authorList>
    </citation>
    <scope>NUCLEOTIDE SEQUENCE [LARGE SCALE MRNA]</scope>
    <source>
        <tissue>Kidney</tissue>
    </source>
</reference>
<organism>
    <name type="scientific">Danio rerio</name>
    <name type="common">Zebrafish</name>
    <name type="synonym">Brachydanio rerio</name>
    <dbReference type="NCBI Taxonomy" id="7955"/>
    <lineage>
        <taxon>Eukaryota</taxon>
        <taxon>Metazoa</taxon>
        <taxon>Chordata</taxon>
        <taxon>Craniata</taxon>
        <taxon>Vertebrata</taxon>
        <taxon>Euteleostomi</taxon>
        <taxon>Actinopterygii</taxon>
        <taxon>Neopterygii</taxon>
        <taxon>Teleostei</taxon>
        <taxon>Ostariophysi</taxon>
        <taxon>Cypriniformes</taxon>
        <taxon>Danionidae</taxon>
        <taxon>Danioninae</taxon>
        <taxon>Danio</taxon>
    </lineage>
</organism>
<sequence>MQDQLISSLSSEDSSPSTPTSDAPAKRLSWSKLMQKLHSSQSLDSDSDNHSSTDDSSDSGSICIPDVSQSEFFDPTEEALCKEVVQLIALNLTDAKDGVLHCSKLLIPEKLLEHIGQELVHLSVSEPCGLRGALIDLCVEQDGSCHAAAQIAVDPYLVPTFQLTLVLRLDSRGLWPKIQGLFTGRSPASPAVRRALRLSTGFRAIKRKLYSSEELLIEEC</sequence>
<accession>Q7T346</accession>
<gene>
    <name type="primary">ddit4</name>
    <name type="ORF">zgc:64114</name>
</gene>
<protein>
    <recommendedName>
        <fullName>DNA damage-inducible transcript 4 protein</fullName>
    </recommendedName>
</protein>